<evidence type="ECO:0000255" key="1">
    <source>
        <dbReference type="HAMAP-Rule" id="MF_00508"/>
    </source>
</evidence>
<evidence type="ECO:0000305" key="2"/>
<keyword id="KW-0687">Ribonucleoprotein</keyword>
<keyword id="KW-0689">Ribosomal protein</keyword>
<feature type="chain" id="PRO_1000015011" description="Small ribosomal subunit protein uS10">
    <location>
        <begin position="1"/>
        <end position="102"/>
    </location>
</feature>
<dbReference type="EMBL" id="CP000726">
    <property type="protein sequence ID" value="ABS33897.1"/>
    <property type="molecule type" value="Genomic_DNA"/>
</dbReference>
<dbReference type="RefSeq" id="WP_003357250.1">
    <property type="nucleotide sequence ID" value="NC_009697.1"/>
</dbReference>
<dbReference type="SMR" id="A7FZ70"/>
<dbReference type="GeneID" id="92940251"/>
<dbReference type="KEGG" id="cba:CLB_3538"/>
<dbReference type="HOGENOM" id="CLU_122625_1_3_9"/>
<dbReference type="GO" id="GO:1990904">
    <property type="term" value="C:ribonucleoprotein complex"/>
    <property type="evidence" value="ECO:0007669"/>
    <property type="project" value="UniProtKB-KW"/>
</dbReference>
<dbReference type="GO" id="GO:0005840">
    <property type="term" value="C:ribosome"/>
    <property type="evidence" value="ECO:0007669"/>
    <property type="project" value="UniProtKB-KW"/>
</dbReference>
<dbReference type="GO" id="GO:0003735">
    <property type="term" value="F:structural constituent of ribosome"/>
    <property type="evidence" value="ECO:0007669"/>
    <property type="project" value="InterPro"/>
</dbReference>
<dbReference type="GO" id="GO:0000049">
    <property type="term" value="F:tRNA binding"/>
    <property type="evidence" value="ECO:0007669"/>
    <property type="project" value="UniProtKB-UniRule"/>
</dbReference>
<dbReference type="GO" id="GO:0006412">
    <property type="term" value="P:translation"/>
    <property type="evidence" value="ECO:0007669"/>
    <property type="project" value="UniProtKB-UniRule"/>
</dbReference>
<dbReference type="FunFam" id="3.30.70.600:FF:000001">
    <property type="entry name" value="30S ribosomal protein S10"/>
    <property type="match status" value="1"/>
</dbReference>
<dbReference type="Gene3D" id="3.30.70.600">
    <property type="entry name" value="Ribosomal protein S10 domain"/>
    <property type="match status" value="1"/>
</dbReference>
<dbReference type="HAMAP" id="MF_00508">
    <property type="entry name" value="Ribosomal_uS10"/>
    <property type="match status" value="1"/>
</dbReference>
<dbReference type="InterPro" id="IPR001848">
    <property type="entry name" value="Ribosomal_uS10"/>
</dbReference>
<dbReference type="InterPro" id="IPR018268">
    <property type="entry name" value="Ribosomal_uS10_CS"/>
</dbReference>
<dbReference type="InterPro" id="IPR027486">
    <property type="entry name" value="Ribosomal_uS10_dom"/>
</dbReference>
<dbReference type="InterPro" id="IPR036838">
    <property type="entry name" value="Ribosomal_uS10_dom_sf"/>
</dbReference>
<dbReference type="NCBIfam" id="NF001861">
    <property type="entry name" value="PRK00596.1"/>
    <property type="match status" value="1"/>
</dbReference>
<dbReference type="NCBIfam" id="TIGR01049">
    <property type="entry name" value="rpsJ_bact"/>
    <property type="match status" value="1"/>
</dbReference>
<dbReference type="PANTHER" id="PTHR11700">
    <property type="entry name" value="30S RIBOSOMAL PROTEIN S10 FAMILY MEMBER"/>
    <property type="match status" value="1"/>
</dbReference>
<dbReference type="Pfam" id="PF00338">
    <property type="entry name" value="Ribosomal_S10"/>
    <property type="match status" value="1"/>
</dbReference>
<dbReference type="PRINTS" id="PR00971">
    <property type="entry name" value="RIBOSOMALS10"/>
</dbReference>
<dbReference type="SMART" id="SM01403">
    <property type="entry name" value="Ribosomal_S10"/>
    <property type="match status" value="1"/>
</dbReference>
<dbReference type="SUPFAM" id="SSF54999">
    <property type="entry name" value="Ribosomal protein S10"/>
    <property type="match status" value="1"/>
</dbReference>
<dbReference type="PROSITE" id="PS00361">
    <property type="entry name" value="RIBOSOMAL_S10"/>
    <property type="match status" value="1"/>
</dbReference>
<name>RS10_CLOB1</name>
<proteinExistence type="inferred from homology"/>
<gene>
    <name evidence="1" type="primary">rpsJ</name>
    <name type="ordered locus">CLB_3538</name>
</gene>
<accession>A7FZ70</accession>
<comment type="function">
    <text evidence="1">Involved in the binding of tRNA to the ribosomes.</text>
</comment>
<comment type="subunit">
    <text evidence="1">Part of the 30S ribosomal subunit.</text>
</comment>
<comment type="similarity">
    <text evidence="1">Belongs to the universal ribosomal protein uS10 family.</text>
</comment>
<sequence>MAKQKIRIRLKAFDHSLLDQSALKIVETAKTTGAKVAGPVPLPTEKDIVTILRAPHKYKDAREQFEIRTHKRLIDIISPSPKTVDALMRLDLPAGVDIEIKL</sequence>
<organism>
    <name type="scientific">Clostridium botulinum (strain ATCC 19397 / Type A)</name>
    <dbReference type="NCBI Taxonomy" id="441770"/>
    <lineage>
        <taxon>Bacteria</taxon>
        <taxon>Bacillati</taxon>
        <taxon>Bacillota</taxon>
        <taxon>Clostridia</taxon>
        <taxon>Eubacteriales</taxon>
        <taxon>Clostridiaceae</taxon>
        <taxon>Clostridium</taxon>
    </lineage>
</organism>
<reference key="1">
    <citation type="journal article" date="2007" name="PLoS ONE">
        <title>Analysis of the neurotoxin complex genes in Clostridium botulinum A1-A4 and B1 strains: BoNT/A3, /Ba4 and /B1 clusters are located within plasmids.</title>
        <authorList>
            <person name="Smith T.J."/>
            <person name="Hill K.K."/>
            <person name="Foley B.T."/>
            <person name="Detter J.C."/>
            <person name="Munk A.C."/>
            <person name="Bruce D.C."/>
            <person name="Doggett N.A."/>
            <person name="Smith L.A."/>
            <person name="Marks J.D."/>
            <person name="Xie G."/>
            <person name="Brettin T.S."/>
        </authorList>
    </citation>
    <scope>NUCLEOTIDE SEQUENCE [LARGE SCALE GENOMIC DNA]</scope>
    <source>
        <strain>ATCC 19397 / Type A</strain>
    </source>
</reference>
<protein>
    <recommendedName>
        <fullName evidence="1">Small ribosomal subunit protein uS10</fullName>
    </recommendedName>
    <alternativeName>
        <fullName evidence="2">30S ribosomal protein S10</fullName>
    </alternativeName>
</protein>